<gene>
    <name evidence="1" type="primary">cmk</name>
    <name type="ordered locus">Tlet_1649</name>
</gene>
<dbReference type="EC" id="2.7.4.25" evidence="1"/>
<dbReference type="EMBL" id="CP000812">
    <property type="protein sequence ID" value="ABV34203.1"/>
    <property type="molecule type" value="Genomic_DNA"/>
</dbReference>
<dbReference type="RefSeq" id="WP_012003679.1">
    <property type="nucleotide sequence ID" value="NZ_BSDV01000001.1"/>
</dbReference>
<dbReference type="SMR" id="A8F7R9"/>
<dbReference type="STRING" id="416591.Tlet_1649"/>
<dbReference type="KEGG" id="tle:Tlet_1649"/>
<dbReference type="eggNOG" id="COG0283">
    <property type="taxonomic scope" value="Bacteria"/>
</dbReference>
<dbReference type="HOGENOM" id="CLU_079959_0_2_0"/>
<dbReference type="OrthoDB" id="9807434at2"/>
<dbReference type="Proteomes" id="UP000002016">
    <property type="component" value="Chromosome"/>
</dbReference>
<dbReference type="GO" id="GO:0005829">
    <property type="term" value="C:cytosol"/>
    <property type="evidence" value="ECO:0007669"/>
    <property type="project" value="TreeGrafter"/>
</dbReference>
<dbReference type="GO" id="GO:0005524">
    <property type="term" value="F:ATP binding"/>
    <property type="evidence" value="ECO:0007669"/>
    <property type="project" value="UniProtKB-UniRule"/>
</dbReference>
<dbReference type="GO" id="GO:0036430">
    <property type="term" value="F:CMP kinase activity"/>
    <property type="evidence" value="ECO:0007669"/>
    <property type="project" value="RHEA"/>
</dbReference>
<dbReference type="GO" id="GO:0036431">
    <property type="term" value="F:dCMP kinase activity"/>
    <property type="evidence" value="ECO:0007669"/>
    <property type="project" value="RHEA"/>
</dbReference>
<dbReference type="GO" id="GO:0015949">
    <property type="term" value="P:nucleobase-containing small molecule interconversion"/>
    <property type="evidence" value="ECO:0007669"/>
    <property type="project" value="TreeGrafter"/>
</dbReference>
<dbReference type="GO" id="GO:0006220">
    <property type="term" value="P:pyrimidine nucleotide metabolic process"/>
    <property type="evidence" value="ECO:0007669"/>
    <property type="project" value="UniProtKB-UniRule"/>
</dbReference>
<dbReference type="CDD" id="cd02020">
    <property type="entry name" value="CMPK"/>
    <property type="match status" value="1"/>
</dbReference>
<dbReference type="Gene3D" id="3.40.50.300">
    <property type="entry name" value="P-loop containing nucleotide triphosphate hydrolases"/>
    <property type="match status" value="1"/>
</dbReference>
<dbReference type="HAMAP" id="MF_00238">
    <property type="entry name" value="Cytidyl_kinase_type1"/>
    <property type="match status" value="1"/>
</dbReference>
<dbReference type="InterPro" id="IPR003136">
    <property type="entry name" value="Cytidylate_kin"/>
</dbReference>
<dbReference type="InterPro" id="IPR011994">
    <property type="entry name" value="Cytidylate_kinase_dom"/>
</dbReference>
<dbReference type="InterPro" id="IPR027417">
    <property type="entry name" value="P-loop_NTPase"/>
</dbReference>
<dbReference type="NCBIfam" id="TIGR00017">
    <property type="entry name" value="cmk"/>
    <property type="match status" value="1"/>
</dbReference>
<dbReference type="PANTHER" id="PTHR21299:SF2">
    <property type="entry name" value="CYTIDYLATE KINASE"/>
    <property type="match status" value="1"/>
</dbReference>
<dbReference type="PANTHER" id="PTHR21299">
    <property type="entry name" value="CYTIDYLATE KINASE/PANTOATE-BETA-ALANINE LIGASE"/>
    <property type="match status" value="1"/>
</dbReference>
<dbReference type="Pfam" id="PF02224">
    <property type="entry name" value="Cytidylate_kin"/>
    <property type="match status" value="1"/>
</dbReference>
<dbReference type="SUPFAM" id="SSF52540">
    <property type="entry name" value="P-loop containing nucleoside triphosphate hydrolases"/>
    <property type="match status" value="1"/>
</dbReference>
<comment type="catalytic activity">
    <reaction evidence="1">
        <text>CMP + ATP = CDP + ADP</text>
        <dbReference type="Rhea" id="RHEA:11600"/>
        <dbReference type="ChEBI" id="CHEBI:30616"/>
        <dbReference type="ChEBI" id="CHEBI:58069"/>
        <dbReference type="ChEBI" id="CHEBI:60377"/>
        <dbReference type="ChEBI" id="CHEBI:456216"/>
        <dbReference type="EC" id="2.7.4.25"/>
    </reaction>
</comment>
<comment type="catalytic activity">
    <reaction evidence="1">
        <text>dCMP + ATP = dCDP + ADP</text>
        <dbReference type="Rhea" id="RHEA:25094"/>
        <dbReference type="ChEBI" id="CHEBI:30616"/>
        <dbReference type="ChEBI" id="CHEBI:57566"/>
        <dbReference type="ChEBI" id="CHEBI:58593"/>
        <dbReference type="ChEBI" id="CHEBI:456216"/>
        <dbReference type="EC" id="2.7.4.25"/>
    </reaction>
</comment>
<comment type="subcellular location">
    <subcellularLocation>
        <location evidence="1">Cytoplasm</location>
    </subcellularLocation>
</comment>
<comment type="similarity">
    <text evidence="1">Belongs to the cytidylate kinase family. Type 1 subfamily.</text>
</comment>
<reference key="1">
    <citation type="submission" date="2007-08" db="EMBL/GenBank/DDBJ databases">
        <title>Complete sequence of Thermotoga lettingae TMO.</title>
        <authorList>
            <consortium name="US DOE Joint Genome Institute"/>
            <person name="Copeland A."/>
            <person name="Lucas S."/>
            <person name="Lapidus A."/>
            <person name="Barry K."/>
            <person name="Glavina del Rio T."/>
            <person name="Dalin E."/>
            <person name="Tice H."/>
            <person name="Pitluck S."/>
            <person name="Foster B."/>
            <person name="Bruce D."/>
            <person name="Schmutz J."/>
            <person name="Larimer F."/>
            <person name="Land M."/>
            <person name="Hauser L."/>
            <person name="Kyrpides N."/>
            <person name="Mikhailova N."/>
            <person name="Nelson K."/>
            <person name="Gogarten J.P."/>
            <person name="Noll K."/>
            <person name="Richardson P."/>
        </authorList>
    </citation>
    <scope>NUCLEOTIDE SEQUENCE [LARGE SCALE GENOMIC DNA]</scope>
    <source>
        <strain>ATCC BAA-301 / DSM 14385 / NBRC 107922 / TMO</strain>
    </source>
</reference>
<protein>
    <recommendedName>
        <fullName evidence="1">Cytidylate kinase</fullName>
        <shortName evidence="1">CK</shortName>
        <ecNumber evidence="1">2.7.4.25</ecNumber>
    </recommendedName>
    <alternativeName>
        <fullName evidence="1">Cytidine monophosphate kinase</fullName>
        <shortName evidence="1">CMP kinase</shortName>
    </alternativeName>
</protein>
<organism>
    <name type="scientific">Pseudothermotoga lettingae (strain ATCC BAA-301 / DSM 14385 / NBRC 107922 / TMO)</name>
    <name type="common">Thermotoga lettingae</name>
    <dbReference type="NCBI Taxonomy" id="416591"/>
    <lineage>
        <taxon>Bacteria</taxon>
        <taxon>Thermotogati</taxon>
        <taxon>Thermotogota</taxon>
        <taxon>Thermotogae</taxon>
        <taxon>Thermotogales</taxon>
        <taxon>Thermotogaceae</taxon>
        <taxon>Pseudothermotoga</taxon>
    </lineage>
</organism>
<name>KCY_PSELT</name>
<feature type="chain" id="PRO_1000058982" description="Cytidylate kinase">
    <location>
        <begin position="1"/>
        <end position="223"/>
    </location>
</feature>
<feature type="binding site" evidence="1">
    <location>
        <begin position="10"/>
        <end position="18"/>
    </location>
    <ligand>
        <name>ATP</name>
        <dbReference type="ChEBI" id="CHEBI:30616"/>
    </ligand>
</feature>
<proteinExistence type="inferred from homology"/>
<keyword id="KW-0067">ATP-binding</keyword>
<keyword id="KW-0963">Cytoplasm</keyword>
<keyword id="KW-0418">Kinase</keyword>
<keyword id="KW-0547">Nucleotide-binding</keyword>
<keyword id="KW-1185">Reference proteome</keyword>
<keyword id="KW-0808">Transferase</keyword>
<accession>A8F7R9</accession>
<evidence type="ECO:0000255" key="1">
    <source>
        <dbReference type="HAMAP-Rule" id="MF_00238"/>
    </source>
</evidence>
<sequence length="223" mass="25050">MNRFLIAIDGPAGSGKSSVAKLVAQKMNMNYLDTGAMYRAVALYLHSKGLSAKDDLKKHLAEIDIEYIDGELYLNKKKVSDEIRSSEAGKLASDFATIPAVRERLTQIQRHICQNGKFVVEGRDIGTVVLPEADVKIFLTASFKERVRRRFEELKAKNMNLTMEDIADQIKIRDRQDSSRSIAPLKPAEDAIVIDTTSKDINEVADEICQIAFRRIKVEDNCC</sequence>